<accession>Q2RQX3</accession>
<reference key="1">
    <citation type="journal article" date="2011" name="Stand. Genomic Sci.">
        <title>Complete genome sequence of Rhodospirillum rubrum type strain (S1).</title>
        <authorList>
            <person name="Munk A.C."/>
            <person name="Copeland A."/>
            <person name="Lucas S."/>
            <person name="Lapidus A."/>
            <person name="Del Rio T.G."/>
            <person name="Barry K."/>
            <person name="Detter J.C."/>
            <person name="Hammon N."/>
            <person name="Israni S."/>
            <person name="Pitluck S."/>
            <person name="Brettin T."/>
            <person name="Bruce D."/>
            <person name="Han C."/>
            <person name="Tapia R."/>
            <person name="Gilna P."/>
            <person name="Schmutz J."/>
            <person name="Larimer F."/>
            <person name="Land M."/>
            <person name="Kyrpides N.C."/>
            <person name="Mavromatis K."/>
            <person name="Richardson P."/>
            <person name="Rohde M."/>
            <person name="Goeker M."/>
            <person name="Klenk H.P."/>
            <person name="Zhang Y."/>
            <person name="Roberts G.P."/>
            <person name="Reslewic S."/>
            <person name="Schwartz D.C."/>
        </authorList>
    </citation>
    <scope>NUCLEOTIDE SEQUENCE [LARGE SCALE GENOMIC DNA]</scope>
    <source>
        <strain>ATCC 11170 / ATH 1.1.1 / DSM 467 / LMG 4362 / NCIMB 8255 / S1</strain>
    </source>
</reference>
<evidence type="ECO:0000255" key="1">
    <source>
        <dbReference type="HAMAP-Rule" id="MF_00537"/>
    </source>
</evidence>
<evidence type="ECO:0000256" key="2">
    <source>
        <dbReference type="SAM" id="MobiDB-lite"/>
    </source>
</evidence>
<evidence type="ECO:0000305" key="3"/>
<dbReference type="EMBL" id="CP000230">
    <property type="protein sequence ID" value="ABC23472.1"/>
    <property type="molecule type" value="Genomic_DNA"/>
</dbReference>
<dbReference type="RefSeq" id="WP_011390425.1">
    <property type="nucleotide sequence ID" value="NC_007643.1"/>
</dbReference>
<dbReference type="RefSeq" id="YP_427759.1">
    <property type="nucleotide sequence ID" value="NC_007643.1"/>
</dbReference>
<dbReference type="SMR" id="Q2RQX3"/>
<dbReference type="STRING" id="269796.Rru_A2675"/>
<dbReference type="EnsemblBacteria" id="ABC23472">
    <property type="protein sequence ID" value="ABC23472"/>
    <property type="gene ID" value="Rru_A2675"/>
</dbReference>
<dbReference type="KEGG" id="rru:Rru_A2675"/>
<dbReference type="PATRIC" id="fig|269796.9.peg.2782"/>
<dbReference type="eggNOG" id="COG0199">
    <property type="taxonomic scope" value="Bacteria"/>
</dbReference>
<dbReference type="HOGENOM" id="CLU_139869_0_1_5"/>
<dbReference type="PhylomeDB" id="Q2RQX3"/>
<dbReference type="Proteomes" id="UP000001929">
    <property type="component" value="Chromosome"/>
</dbReference>
<dbReference type="GO" id="GO:0005737">
    <property type="term" value="C:cytoplasm"/>
    <property type="evidence" value="ECO:0007669"/>
    <property type="project" value="UniProtKB-ARBA"/>
</dbReference>
<dbReference type="GO" id="GO:0015935">
    <property type="term" value="C:small ribosomal subunit"/>
    <property type="evidence" value="ECO:0007669"/>
    <property type="project" value="TreeGrafter"/>
</dbReference>
<dbReference type="GO" id="GO:0019843">
    <property type="term" value="F:rRNA binding"/>
    <property type="evidence" value="ECO:0007669"/>
    <property type="project" value="UniProtKB-UniRule"/>
</dbReference>
<dbReference type="GO" id="GO:0003735">
    <property type="term" value="F:structural constituent of ribosome"/>
    <property type="evidence" value="ECO:0007669"/>
    <property type="project" value="InterPro"/>
</dbReference>
<dbReference type="GO" id="GO:0006412">
    <property type="term" value="P:translation"/>
    <property type="evidence" value="ECO:0007669"/>
    <property type="project" value="UniProtKB-UniRule"/>
</dbReference>
<dbReference type="FunFam" id="1.10.287.1480:FF:000001">
    <property type="entry name" value="30S ribosomal protein S14"/>
    <property type="match status" value="1"/>
</dbReference>
<dbReference type="Gene3D" id="1.10.287.1480">
    <property type="match status" value="1"/>
</dbReference>
<dbReference type="HAMAP" id="MF_00537">
    <property type="entry name" value="Ribosomal_uS14_1"/>
    <property type="match status" value="1"/>
</dbReference>
<dbReference type="InterPro" id="IPR001209">
    <property type="entry name" value="Ribosomal_uS14"/>
</dbReference>
<dbReference type="InterPro" id="IPR023036">
    <property type="entry name" value="Ribosomal_uS14_bac/plastid"/>
</dbReference>
<dbReference type="NCBIfam" id="NF006477">
    <property type="entry name" value="PRK08881.1"/>
    <property type="match status" value="1"/>
</dbReference>
<dbReference type="PANTHER" id="PTHR19836">
    <property type="entry name" value="30S RIBOSOMAL PROTEIN S14"/>
    <property type="match status" value="1"/>
</dbReference>
<dbReference type="PANTHER" id="PTHR19836:SF19">
    <property type="entry name" value="SMALL RIBOSOMAL SUBUNIT PROTEIN US14M"/>
    <property type="match status" value="1"/>
</dbReference>
<dbReference type="Pfam" id="PF00253">
    <property type="entry name" value="Ribosomal_S14"/>
    <property type="match status" value="1"/>
</dbReference>
<dbReference type="SUPFAM" id="SSF57716">
    <property type="entry name" value="Glucocorticoid receptor-like (DNA-binding domain)"/>
    <property type="match status" value="1"/>
</dbReference>
<feature type="chain" id="PRO_0000269059" description="Small ribosomal subunit protein uS14">
    <location>
        <begin position="1"/>
        <end position="101"/>
    </location>
</feature>
<feature type="region of interest" description="Disordered" evidence="2">
    <location>
        <begin position="1"/>
        <end position="20"/>
    </location>
</feature>
<proteinExistence type="inferred from homology"/>
<organism>
    <name type="scientific">Rhodospirillum rubrum (strain ATCC 11170 / ATH 1.1.1 / DSM 467 / LMG 4362 / NCIMB 8255 / S1)</name>
    <dbReference type="NCBI Taxonomy" id="269796"/>
    <lineage>
        <taxon>Bacteria</taxon>
        <taxon>Pseudomonadati</taxon>
        <taxon>Pseudomonadota</taxon>
        <taxon>Alphaproteobacteria</taxon>
        <taxon>Rhodospirillales</taxon>
        <taxon>Rhodospirillaceae</taxon>
        <taxon>Rhodospirillum</taxon>
    </lineage>
</organism>
<keyword id="KW-1185">Reference proteome</keyword>
<keyword id="KW-0687">Ribonucleoprotein</keyword>
<keyword id="KW-0689">Ribosomal protein</keyword>
<keyword id="KW-0694">RNA-binding</keyword>
<keyword id="KW-0699">rRNA-binding</keyword>
<sequence>MAKISAVERNKKRERLTKRDAGKRAELKALIKDRALEPEDRFQAVLKLAQLPRNGSKTRVHNRCELTGRPHSVYRKFKLGRIMLRDLASQGQIPGMVKSSW</sequence>
<gene>
    <name evidence="1" type="primary">rpsN</name>
    <name type="ordered locus">Rru_A2675</name>
</gene>
<name>RS14_RHORT</name>
<protein>
    <recommendedName>
        <fullName evidence="1">Small ribosomal subunit protein uS14</fullName>
    </recommendedName>
    <alternativeName>
        <fullName evidence="3">30S ribosomal protein S14</fullName>
    </alternativeName>
</protein>
<comment type="function">
    <text evidence="1">Binds 16S rRNA, required for the assembly of 30S particles and may also be responsible for determining the conformation of the 16S rRNA at the A site.</text>
</comment>
<comment type="subunit">
    <text evidence="1">Part of the 30S ribosomal subunit. Contacts proteins S3 and S10.</text>
</comment>
<comment type="similarity">
    <text evidence="1">Belongs to the universal ribosomal protein uS14 family.</text>
</comment>